<proteinExistence type="inferred from homology"/>
<dbReference type="EMBL" id="CP000034">
    <property type="protein sequence ID" value="ABB63456.1"/>
    <property type="molecule type" value="Genomic_DNA"/>
</dbReference>
<dbReference type="RefSeq" id="WP_001140433.1">
    <property type="nucleotide sequence ID" value="NC_007606.1"/>
</dbReference>
<dbReference type="RefSeq" id="YP_404947.1">
    <property type="nucleotide sequence ID" value="NC_007606.1"/>
</dbReference>
<dbReference type="SMR" id="Q32B49"/>
<dbReference type="STRING" id="300267.SDY_3478"/>
<dbReference type="EnsemblBacteria" id="ABB63456">
    <property type="protein sequence ID" value="ABB63456"/>
    <property type="gene ID" value="SDY_3478"/>
</dbReference>
<dbReference type="GeneID" id="93778685"/>
<dbReference type="KEGG" id="sdy:SDY_3478"/>
<dbReference type="PATRIC" id="fig|300267.13.peg.4131"/>
<dbReference type="HOGENOM" id="CLU_131047_1_4_6"/>
<dbReference type="Proteomes" id="UP000002716">
    <property type="component" value="Chromosome"/>
</dbReference>
<dbReference type="GO" id="GO:0022625">
    <property type="term" value="C:cytosolic large ribosomal subunit"/>
    <property type="evidence" value="ECO:0007669"/>
    <property type="project" value="TreeGrafter"/>
</dbReference>
<dbReference type="GO" id="GO:0003735">
    <property type="term" value="F:structural constituent of ribosome"/>
    <property type="evidence" value="ECO:0007669"/>
    <property type="project" value="InterPro"/>
</dbReference>
<dbReference type="GO" id="GO:0006412">
    <property type="term" value="P:translation"/>
    <property type="evidence" value="ECO:0007669"/>
    <property type="project" value="UniProtKB-UniRule"/>
</dbReference>
<dbReference type="CDD" id="cd01658">
    <property type="entry name" value="Ribosomal_L30"/>
    <property type="match status" value="1"/>
</dbReference>
<dbReference type="FunFam" id="3.30.1390.20:FF:000001">
    <property type="entry name" value="50S ribosomal protein L30"/>
    <property type="match status" value="1"/>
</dbReference>
<dbReference type="Gene3D" id="3.30.1390.20">
    <property type="entry name" value="Ribosomal protein L30, ferredoxin-like fold domain"/>
    <property type="match status" value="1"/>
</dbReference>
<dbReference type="HAMAP" id="MF_01371_B">
    <property type="entry name" value="Ribosomal_uL30_B"/>
    <property type="match status" value="1"/>
</dbReference>
<dbReference type="InterPro" id="IPR036919">
    <property type="entry name" value="Ribo_uL30_ferredoxin-like_sf"/>
</dbReference>
<dbReference type="InterPro" id="IPR005996">
    <property type="entry name" value="Ribosomal_uL30_bac-type"/>
</dbReference>
<dbReference type="InterPro" id="IPR018038">
    <property type="entry name" value="Ribosomal_uL30_CS"/>
</dbReference>
<dbReference type="InterPro" id="IPR016082">
    <property type="entry name" value="Ribosomal_uL30_ferredoxin-like"/>
</dbReference>
<dbReference type="NCBIfam" id="TIGR01308">
    <property type="entry name" value="rpmD_bact"/>
    <property type="match status" value="1"/>
</dbReference>
<dbReference type="PANTHER" id="PTHR15892:SF2">
    <property type="entry name" value="LARGE RIBOSOMAL SUBUNIT PROTEIN UL30M"/>
    <property type="match status" value="1"/>
</dbReference>
<dbReference type="PANTHER" id="PTHR15892">
    <property type="entry name" value="MITOCHONDRIAL RIBOSOMAL PROTEIN L30"/>
    <property type="match status" value="1"/>
</dbReference>
<dbReference type="Pfam" id="PF00327">
    <property type="entry name" value="Ribosomal_L30"/>
    <property type="match status" value="1"/>
</dbReference>
<dbReference type="PIRSF" id="PIRSF002211">
    <property type="entry name" value="Ribosomal_L30_bac-type"/>
    <property type="match status" value="1"/>
</dbReference>
<dbReference type="SUPFAM" id="SSF55129">
    <property type="entry name" value="Ribosomal protein L30p/L7e"/>
    <property type="match status" value="1"/>
</dbReference>
<dbReference type="PROSITE" id="PS00634">
    <property type="entry name" value="RIBOSOMAL_L30"/>
    <property type="match status" value="1"/>
</dbReference>
<evidence type="ECO:0000255" key="1">
    <source>
        <dbReference type="HAMAP-Rule" id="MF_01371"/>
    </source>
</evidence>
<evidence type="ECO:0000305" key="2"/>
<gene>
    <name evidence="1" type="primary">rpmD</name>
    <name type="ordered locus">SDY_3478</name>
</gene>
<feature type="chain" id="PRO_0000273855" description="Large ribosomal subunit protein uL30">
    <location>
        <begin position="1"/>
        <end position="59"/>
    </location>
</feature>
<comment type="subunit">
    <text evidence="1">Part of the 50S ribosomal subunit.</text>
</comment>
<comment type="similarity">
    <text evidence="1">Belongs to the universal ribosomal protein uL30 family.</text>
</comment>
<reference key="1">
    <citation type="journal article" date="2005" name="Nucleic Acids Res.">
        <title>Genome dynamics and diversity of Shigella species, the etiologic agents of bacillary dysentery.</title>
        <authorList>
            <person name="Yang F."/>
            <person name="Yang J."/>
            <person name="Zhang X."/>
            <person name="Chen L."/>
            <person name="Jiang Y."/>
            <person name="Yan Y."/>
            <person name="Tang X."/>
            <person name="Wang J."/>
            <person name="Xiong Z."/>
            <person name="Dong J."/>
            <person name="Xue Y."/>
            <person name="Zhu Y."/>
            <person name="Xu X."/>
            <person name="Sun L."/>
            <person name="Chen S."/>
            <person name="Nie H."/>
            <person name="Peng J."/>
            <person name="Xu J."/>
            <person name="Wang Y."/>
            <person name="Yuan Z."/>
            <person name="Wen Y."/>
            <person name="Yao Z."/>
            <person name="Shen Y."/>
            <person name="Qiang B."/>
            <person name="Hou Y."/>
            <person name="Yu J."/>
            <person name="Jin Q."/>
        </authorList>
    </citation>
    <scope>NUCLEOTIDE SEQUENCE [LARGE SCALE GENOMIC DNA]</scope>
    <source>
        <strain>Sd197</strain>
    </source>
</reference>
<accession>Q32B49</accession>
<sequence length="59" mass="6542">MAKTIKITQTRSAIGRLPKHKATLLGLGLRRIGHTVEREDTPAIRGMINAVSFMVKVEE</sequence>
<protein>
    <recommendedName>
        <fullName evidence="1">Large ribosomal subunit protein uL30</fullName>
    </recommendedName>
    <alternativeName>
        <fullName evidence="2">50S ribosomal protein L30</fullName>
    </alternativeName>
</protein>
<name>RL30_SHIDS</name>
<organism>
    <name type="scientific">Shigella dysenteriae serotype 1 (strain Sd197)</name>
    <dbReference type="NCBI Taxonomy" id="300267"/>
    <lineage>
        <taxon>Bacteria</taxon>
        <taxon>Pseudomonadati</taxon>
        <taxon>Pseudomonadota</taxon>
        <taxon>Gammaproteobacteria</taxon>
        <taxon>Enterobacterales</taxon>
        <taxon>Enterobacteriaceae</taxon>
        <taxon>Shigella</taxon>
    </lineage>
</organism>
<keyword id="KW-1185">Reference proteome</keyword>
<keyword id="KW-0687">Ribonucleoprotein</keyword>
<keyword id="KW-0689">Ribosomal protein</keyword>